<accession>P43356</accession>
<accession>A8K328</accession>
<accession>Q32NC6</accession>
<reference key="1">
    <citation type="journal article" date="1994" name="Immunogenetics">
        <title>Sequence and expression pattern of the human MAGE2 gene.</title>
        <authorList>
            <person name="De Smet C."/>
            <person name="Lurquin C."/>
            <person name="van der Bruggen P."/>
            <person name="De Plaen E."/>
            <person name="Brasseur F."/>
            <person name="Boon T."/>
        </authorList>
    </citation>
    <scope>NUCLEOTIDE SEQUENCE [GENOMIC DNA]</scope>
</reference>
<reference key="2">
    <citation type="journal article" date="2004" name="Nat. Genet.">
        <title>Complete sequencing and characterization of 21,243 full-length human cDNAs.</title>
        <authorList>
            <person name="Ota T."/>
            <person name="Suzuki Y."/>
            <person name="Nishikawa T."/>
            <person name="Otsuki T."/>
            <person name="Sugiyama T."/>
            <person name="Irie R."/>
            <person name="Wakamatsu A."/>
            <person name="Hayashi K."/>
            <person name="Sato H."/>
            <person name="Nagai K."/>
            <person name="Kimura K."/>
            <person name="Makita H."/>
            <person name="Sekine M."/>
            <person name="Obayashi M."/>
            <person name="Nishi T."/>
            <person name="Shibahara T."/>
            <person name="Tanaka T."/>
            <person name="Ishii S."/>
            <person name="Yamamoto J."/>
            <person name="Saito K."/>
            <person name="Kawai Y."/>
            <person name="Isono Y."/>
            <person name="Nakamura Y."/>
            <person name="Nagahari K."/>
            <person name="Murakami K."/>
            <person name="Yasuda T."/>
            <person name="Iwayanagi T."/>
            <person name="Wagatsuma M."/>
            <person name="Shiratori A."/>
            <person name="Sudo H."/>
            <person name="Hosoiri T."/>
            <person name="Kaku Y."/>
            <person name="Kodaira H."/>
            <person name="Kondo H."/>
            <person name="Sugawara M."/>
            <person name="Takahashi M."/>
            <person name="Kanda K."/>
            <person name="Yokoi T."/>
            <person name="Furuya T."/>
            <person name="Kikkawa E."/>
            <person name="Omura Y."/>
            <person name="Abe K."/>
            <person name="Kamihara K."/>
            <person name="Katsuta N."/>
            <person name="Sato K."/>
            <person name="Tanikawa M."/>
            <person name="Yamazaki M."/>
            <person name="Ninomiya K."/>
            <person name="Ishibashi T."/>
            <person name="Yamashita H."/>
            <person name="Murakawa K."/>
            <person name="Fujimori K."/>
            <person name="Tanai H."/>
            <person name="Kimata M."/>
            <person name="Watanabe M."/>
            <person name="Hiraoka S."/>
            <person name="Chiba Y."/>
            <person name="Ishida S."/>
            <person name="Ono Y."/>
            <person name="Takiguchi S."/>
            <person name="Watanabe S."/>
            <person name="Yosida M."/>
            <person name="Hotuta T."/>
            <person name="Kusano J."/>
            <person name="Kanehori K."/>
            <person name="Takahashi-Fujii A."/>
            <person name="Hara H."/>
            <person name="Tanase T.-O."/>
            <person name="Nomura Y."/>
            <person name="Togiya S."/>
            <person name="Komai F."/>
            <person name="Hara R."/>
            <person name="Takeuchi K."/>
            <person name="Arita M."/>
            <person name="Imose N."/>
            <person name="Musashino K."/>
            <person name="Yuuki H."/>
            <person name="Oshima A."/>
            <person name="Sasaki N."/>
            <person name="Aotsuka S."/>
            <person name="Yoshikawa Y."/>
            <person name="Matsunawa H."/>
            <person name="Ichihara T."/>
            <person name="Shiohata N."/>
            <person name="Sano S."/>
            <person name="Moriya S."/>
            <person name="Momiyama H."/>
            <person name="Satoh N."/>
            <person name="Takami S."/>
            <person name="Terashima Y."/>
            <person name="Suzuki O."/>
            <person name="Nakagawa S."/>
            <person name="Senoh A."/>
            <person name="Mizoguchi H."/>
            <person name="Goto Y."/>
            <person name="Shimizu F."/>
            <person name="Wakebe H."/>
            <person name="Hishigaki H."/>
            <person name="Watanabe T."/>
            <person name="Sugiyama A."/>
            <person name="Takemoto M."/>
            <person name="Kawakami B."/>
            <person name="Yamazaki M."/>
            <person name="Watanabe K."/>
            <person name="Kumagai A."/>
            <person name="Itakura S."/>
            <person name="Fukuzumi Y."/>
            <person name="Fujimori Y."/>
            <person name="Komiyama M."/>
            <person name="Tashiro H."/>
            <person name="Tanigami A."/>
            <person name="Fujiwara T."/>
            <person name="Ono T."/>
            <person name="Yamada K."/>
            <person name="Fujii Y."/>
            <person name="Ozaki K."/>
            <person name="Hirao M."/>
            <person name="Ohmori Y."/>
            <person name="Kawabata A."/>
            <person name="Hikiji T."/>
            <person name="Kobatake N."/>
            <person name="Inagaki H."/>
            <person name="Ikema Y."/>
            <person name="Okamoto S."/>
            <person name="Okitani R."/>
            <person name="Kawakami T."/>
            <person name="Noguchi S."/>
            <person name="Itoh T."/>
            <person name="Shigeta K."/>
            <person name="Senba T."/>
            <person name="Matsumura K."/>
            <person name="Nakajima Y."/>
            <person name="Mizuno T."/>
            <person name="Morinaga M."/>
            <person name="Sasaki M."/>
            <person name="Togashi T."/>
            <person name="Oyama M."/>
            <person name="Hata H."/>
            <person name="Watanabe M."/>
            <person name="Komatsu T."/>
            <person name="Mizushima-Sugano J."/>
            <person name="Satoh T."/>
            <person name="Shirai Y."/>
            <person name="Takahashi Y."/>
            <person name="Nakagawa K."/>
            <person name="Okumura K."/>
            <person name="Nagase T."/>
            <person name="Nomura N."/>
            <person name="Kikuchi H."/>
            <person name="Masuho Y."/>
            <person name="Yamashita R."/>
            <person name="Nakai K."/>
            <person name="Yada T."/>
            <person name="Nakamura Y."/>
            <person name="Ohara O."/>
            <person name="Isogai T."/>
            <person name="Sugano S."/>
        </authorList>
    </citation>
    <scope>NUCLEOTIDE SEQUENCE [LARGE SCALE MRNA]</scope>
</reference>
<reference key="3">
    <citation type="journal article" date="2000" name="Genome Res.">
        <title>Comparative genome sequence analysis of the Bpa/Str region in mouse and man.</title>
        <authorList>
            <person name="Mallon A.-M."/>
            <person name="Platzer M."/>
            <person name="Bate R."/>
            <person name="Gloeckner G."/>
            <person name="Botcherby M.R.M."/>
            <person name="Nordsiek G."/>
            <person name="Strivens M.A."/>
            <person name="Kioschis P."/>
            <person name="Dangel A."/>
            <person name="Cunningham D."/>
            <person name="Straw R.N.A."/>
            <person name="Weston P."/>
            <person name="Gilbert M."/>
            <person name="Fernando S."/>
            <person name="Goodall K."/>
            <person name="Hunter G."/>
            <person name="Greystrong J.S."/>
            <person name="Clarke D."/>
            <person name="Kimberley C."/>
            <person name="Goerdes M."/>
            <person name="Blechschmidt K."/>
            <person name="Rump A."/>
            <person name="Hinzmann B."/>
            <person name="Mundy C.R."/>
            <person name="Miller W."/>
            <person name="Poustka A."/>
            <person name="Herman G.E."/>
            <person name="Rhodes M."/>
            <person name="Denny P."/>
            <person name="Rosenthal A."/>
            <person name="Brown S.D.M."/>
        </authorList>
    </citation>
    <scope>NUCLEOTIDE SEQUENCE [LARGE SCALE GENOMIC DNA]</scope>
</reference>
<reference key="4">
    <citation type="journal article" date="2005" name="Nature">
        <title>The DNA sequence of the human X chromosome.</title>
        <authorList>
            <person name="Ross M.T."/>
            <person name="Grafham D.V."/>
            <person name="Coffey A.J."/>
            <person name="Scherer S."/>
            <person name="McLay K."/>
            <person name="Muzny D."/>
            <person name="Platzer M."/>
            <person name="Howell G.R."/>
            <person name="Burrows C."/>
            <person name="Bird C.P."/>
            <person name="Frankish A."/>
            <person name="Lovell F.L."/>
            <person name="Howe K.L."/>
            <person name="Ashurst J.L."/>
            <person name="Fulton R.S."/>
            <person name="Sudbrak R."/>
            <person name="Wen G."/>
            <person name="Jones M.C."/>
            <person name="Hurles M.E."/>
            <person name="Andrews T.D."/>
            <person name="Scott C.E."/>
            <person name="Searle S."/>
            <person name="Ramser J."/>
            <person name="Whittaker A."/>
            <person name="Deadman R."/>
            <person name="Carter N.P."/>
            <person name="Hunt S.E."/>
            <person name="Chen R."/>
            <person name="Cree A."/>
            <person name="Gunaratne P."/>
            <person name="Havlak P."/>
            <person name="Hodgson A."/>
            <person name="Metzker M.L."/>
            <person name="Richards S."/>
            <person name="Scott G."/>
            <person name="Steffen D."/>
            <person name="Sodergren E."/>
            <person name="Wheeler D.A."/>
            <person name="Worley K.C."/>
            <person name="Ainscough R."/>
            <person name="Ambrose K.D."/>
            <person name="Ansari-Lari M.A."/>
            <person name="Aradhya S."/>
            <person name="Ashwell R.I."/>
            <person name="Babbage A.K."/>
            <person name="Bagguley C.L."/>
            <person name="Ballabio A."/>
            <person name="Banerjee R."/>
            <person name="Barker G.E."/>
            <person name="Barlow K.F."/>
            <person name="Barrett I.P."/>
            <person name="Bates K.N."/>
            <person name="Beare D.M."/>
            <person name="Beasley H."/>
            <person name="Beasley O."/>
            <person name="Beck A."/>
            <person name="Bethel G."/>
            <person name="Blechschmidt K."/>
            <person name="Brady N."/>
            <person name="Bray-Allen S."/>
            <person name="Bridgeman A.M."/>
            <person name="Brown A.J."/>
            <person name="Brown M.J."/>
            <person name="Bonnin D."/>
            <person name="Bruford E.A."/>
            <person name="Buhay C."/>
            <person name="Burch P."/>
            <person name="Burford D."/>
            <person name="Burgess J."/>
            <person name="Burrill W."/>
            <person name="Burton J."/>
            <person name="Bye J.M."/>
            <person name="Carder C."/>
            <person name="Carrel L."/>
            <person name="Chako J."/>
            <person name="Chapman J.C."/>
            <person name="Chavez D."/>
            <person name="Chen E."/>
            <person name="Chen G."/>
            <person name="Chen Y."/>
            <person name="Chen Z."/>
            <person name="Chinault C."/>
            <person name="Ciccodicola A."/>
            <person name="Clark S.Y."/>
            <person name="Clarke G."/>
            <person name="Clee C.M."/>
            <person name="Clegg S."/>
            <person name="Clerc-Blankenburg K."/>
            <person name="Clifford K."/>
            <person name="Cobley V."/>
            <person name="Cole C.G."/>
            <person name="Conquer J.S."/>
            <person name="Corby N."/>
            <person name="Connor R.E."/>
            <person name="David R."/>
            <person name="Davies J."/>
            <person name="Davis C."/>
            <person name="Davis J."/>
            <person name="Delgado O."/>
            <person name="Deshazo D."/>
            <person name="Dhami P."/>
            <person name="Ding Y."/>
            <person name="Dinh H."/>
            <person name="Dodsworth S."/>
            <person name="Draper H."/>
            <person name="Dugan-Rocha S."/>
            <person name="Dunham A."/>
            <person name="Dunn M."/>
            <person name="Durbin K.J."/>
            <person name="Dutta I."/>
            <person name="Eades T."/>
            <person name="Ellwood M."/>
            <person name="Emery-Cohen A."/>
            <person name="Errington H."/>
            <person name="Evans K.L."/>
            <person name="Faulkner L."/>
            <person name="Francis F."/>
            <person name="Frankland J."/>
            <person name="Fraser A.E."/>
            <person name="Galgoczy P."/>
            <person name="Gilbert J."/>
            <person name="Gill R."/>
            <person name="Gloeckner G."/>
            <person name="Gregory S.G."/>
            <person name="Gribble S."/>
            <person name="Griffiths C."/>
            <person name="Grocock R."/>
            <person name="Gu Y."/>
            <person name="Gwilliam R."/>
            <person name="Hamilton C."/>
            <person name="Hart E.A."/>
            <person name="Hawes A."/>
            <person name="Heath P.D."/>
            <person name="Heitmann K."/>
            <person name="Hennig S."/>
            <person name="Hernandez J."/>
            <person name="Hinzmann B."/>
            <person name="Ho S."/>
            <person name="Hoffs M."/>
            <person name="Howden P.J."/>
            <person name="Huckle E.J."/>
            <person name="Hume J."/>
            <person name="Hunt P.J."/>
            <person name="Hunt A.R."/>
            <person name="Isherwood J."/>
            <person name="Jacob L."/>
            <person name="Johnson D."/>
            <person name="Jones S."/>
            <person name="de Jong P.J."/>
            <person name="Joseph S.S."/>
            <person name="Keenan S."/>
            <person name="Kelly S."/>
            <person name="Kershaw J.K."/>
            <person name="Khan Z."/>
            <person name="Kioschis P."/>
            <person name="Klages S."/>
            <person name="Knights A.J."/>
            <person name="Kosiura A."/>
            <person name="Kovar-Smith C."/>
            <person name="Laird G.K."/>
            <person name="Langford C."/>
            <person name="Lawlor S."/>
            <person name="Leversha M."/>
            <person name="Lewis L."/>
            <person name="Liu W."/>
            <person name="Lloyd C."/>
            <person name="Lloyd D.M."/>
            <person name="Loulseged H."/>
            <person name="Loveland J.E."/>
            <person name="Lovell J.D."/>
            <person name="Lozado R."/>
            <person name="Lu J."/>
            <person name="Lyne R."/>
            <person name="Ma J."/>
            <person name="Maheshwari M."/>
            <person name="Matthews L.H."/>
            <person name="McDowall J."/>
            <person name="McLaren S."/>
            <person name="McMurray A."/>
            <person name="Meidl P."/>
            <person name="Meitinger T."/>
            <person name="Milne S."/>
            <person name="Miner G."/>
            <person name="Mistry S.L."/>
            <person name="Morgan M."/>
            <person name="Morris S."/>
            <person name="Mueller I."/>
            <person name="Mullikin J.C."/>
            <person name="Nguyen N."/>
            <person name="Nordsiek G."/>
            <person name="Nyakatura G."/>
            <person name="O'dell C.N."/>
            <person name="Okwuonu G."/>
            <person name="Palmer S."/>
            <person name="Pandian R."/>
            <person name="Parker D."/>
            <person name="Parrish J."/>
            <person name="Pasternak S."/>
            <person name="Patel D."/>
            <person name="Pearce A.V."/>
            <person name="Pearson D.M."/>
            <person name="Pelan S.E."/>
            <person name="Perez L."/>
            <person name="Porter K.M."/>
            <person name="Ramsey Y."/>
            <person name="Reichwald K."/>
            <person name="Rhodes S."/>
            <person name="Ridler K.A."/>
            <person name="Schlessinger D."/>
            <person name="Schueler M.G."/>
            <person name="Sehra H.K."/>
            <person name="Shaw-Smith C."/>
            <person name="Shen H."/>
            <person name="Sheridan E.M."/>
            <person name="Shownkeen R."/>
            <person name="Skuce C.D."/>
            <person name="Smith M.L."/>
            <person name="Sotheran E.C."/>
            <person name="Steingruber H.E."/>
            <person name="Steward C.A."/>
            <person name="Storey R."/>
            <person name="Swann R.M."/>
            <person name="Swarbreck D."/>
            <person name="Tabor P.E."/>
            <person name="Taudien S."/>
            <person name="Taylor T."/>
            <person name="Teague B."/>
            <person name="Thomas K."/>
            <person name="Thorpe A."/>
            <person name="Timms K."/>
            <person name="Tracey A."/>
            <person name="Trevanion S."/>
            <person name="Tromans A.C."/>
            <person name="d'Urso M."/>
            <person name="Verduzco D."/>
            <person name="Villasana D."/>
            <person name="Waldron L."/>
            <person name="Wall M."/>
            <person name="Wang Q."/>
            <person name="Warren J."/>
            <person name="Warry G.L."/>
            <person name="Wei X."/>
            <person name="West A."/>
            <person name="Whitehead S.L."/>
            <person name="Whiteley M.N."/>
            <person name="Wilkinson J.E."/>
            <person name="Willey D.L."/>
            <person name="Williams G."/>
            <person name="Williams L."/>
            <person name="Williamson A."/>
            <person name="Williamson H."/>
            <person name="Wilming L."/>
            <person name="Woodmansey R.L."/>
            <person name="Wray P.W."/>
            <person name="Yen J."/>
            <person name="Zhang J."/>
            <person name="Zhou J."/>
            <person name="Zoghbi H."/>
            <person name="Zorilla S."/>
            <person name="Buck D."/>
            <person name="Reinhardt R."/>
            <person name="Poustka A."/>
            <person name="Rosenthal A."/>
            <person name="Lehrach H."/>
            <person name="Meindl A."/>
            <person name="Minx P.J."/>
            <person name="Hillier L.W."/>
            <person name="Willard H.F."/>
            <person name="Wilson R.K."/>
            <person name="Waterston R.H."/>
            <person name="Rice C.M."/>
            <person name="Vaudin M."/>
            <person name="Coulson A."/>
            <person name="Nelson D.L."/>
            <person name="Weinstock G."/>
            <person name="Sulston J.E."/>
            <person name="Durbin R.M."/>
            <person name="Hubbard T."/>
            <person name="Gibbs R.A."/>
            <person name="Beck S."/>
            <person name="Rogers J."/>
            <person name="Bentley D.R."/>
        </authorList>
    </citation>
    <scope>NUCLEOTIDE SEQUENCE [LARGE SCALE GENOMIC DNA]</scope>
</reference>
<reference key="5">
    <citation type="submission" date="2005-07" db="EMBL/GenBank/DDBJ databases">
        <authorList>
            <person name="Mural R.J."/>
            <person name="Istrail S."/>
            <person name="Sutton G.G."/>
            <person name="Florea L."/>
            <person name="Halpern A.L."/>
            <person name="Mobarry C.M."/>
            <person name="Lippert R."/>
            <person name="Walenz B."/>
            <person name="Shatkay H."/>
            <person name="Dew I."/>
            <person name="Miller J.R."/>
            <person name="Flanigan M.J."/>
            <person name="Edwards N.J."/>
            <person name="Bolanos R."/>
            <person name="Fasulo D."/>
            <person name="Halldorsson B.V."/>
            <person name="Hannenhalli S."/>
            <person name="Turner R."/>
            <person name="Yooseph S."/>
            <person name="Lu F."/>
            <person name="Nusskern D.R."/>
            <person name="Shue B.C."/>
            <person name="Zheng X.H."/>
            <person name="Zhong F."/>
            <person name="Delcher A.L."/>
            <person name="Huson D.H."/>
            <person name="Kravitz S.A."/>
            <person name="Mouchard L."/>
            <person name="Reinert K."/>
            <person name="Remington K.A."/>
            <person name="Clark A.G."/>
            <person name="Waterman M.S."/>
            <person name="Eichler E.E."/>
            <person name="Adams M.D."/>
            <person name="Hunkapiller M.W."/>
            <person name="Myers E.W."/>
            <person name="Venter J.C."/>
        </authorList>
    </citation>
    <scope>NUCLEOTIDE SEQUENCE [LARGE SCALE GENOMIC DNA]</scope>
</reference>
<reference key="6">
    <citation type="journal article" date="2004" name="Genome Res.">
        <title>The status, quality, and expansion of the NIH full-length cDNA project: the Mammalian Gene Collection (MGC).</title>
        <authorList>
            <consortium name="The MGC Project Team"/>
        </authorList>
    </citation>
    <scope>NUCLEOTIDE SEQUENCE [LARGE SCALE MRNA]</scope>
    <source>
        <tissue>Skin</tissue>
    </source>
</reference>
<reference key="7">
    <citation type="journal article" date="1994" name="J. Exp. Med.">
        <title>Human gene MAGE-3 codes for an antigen recognized on a melanoma by autologous cytolytic T lymphocytes.</title>
        <authorList>
            <person name="Gaugler B."/>
            <person name="van den Eynde B."/>
            <person name="van der Bruggen P."/>
            <person name="Romero P."/>
            <person name="Gaforio J.J."/>
            <person name="De Plaen E."/>
            <person name="Lethe B.G."/>
            <person name="Brasseur F."/>
            <person name="Boon T."/>
        </authorList>
    </citation>
    <scope>MUTAGENESIS</scope>
    <source>
        <tissue>Blood</tissue>
    </source>
</reference>
<reference key="8">
    <citation type="journal article" date="2006" name="Proc. Natl. Acad. Sci. U.S.A.">
        <title>MAGE-A tumor antigens target p53 transactivation function through histone deacetylase recruitment and confer resistance to chemotherapeutic agents.</title>
        <authorList>
            <person name="Monte M."/>
            <person name="Simonatto M."/>
            <person name="Peche L.Y."/>
            <person name="Bublik D.R."/>
            <person name="Gobessi S."/>
            <person name="Pierotti M.A."/>
            <person name="Rodolfo M."/>
            <person name="Schneider C."/>
        </authorList>
    </citation>
    <scope>FUNCTION</scope>
    <scope>SUBCELLULAR LOCATION</scope>
    <scope>INTERACTION WITH TP53 AND HDAC3</scope>
</reference>
<reference key="9">
    <citation type="journal article" date="2007" name="Cancer Res.">
        <title>MAGE-A, mMage-b, and MAGE-C proteins form complexes with KAP1 and suppress p53-dependent apoptosis in MAGE-positive cell lines.</title>
        <authorList>
            <person name="Yang B."/>
            <person name="O'Herrin S.M."/>
            <person name="Wu J."/>
            <person name="Reagan-Shaw S."/>
            <person name="Ma Y."/>
            <person name="Bhat K.M."/>
            <person name="Gravekamp C."/>
            <person name="Setaluri V."/>
            <person name="Peters N."/>
            <person name="Hoffmann F.M."/>
            <person name="Peng H."/>
            <person name="Ivanov A.V."/>
            <person name="Simpson A.J."/>
            <person name="Longley B.J."/>
        </authorList>
    </citation>
    <scope>FUNCTION</scope>
</reference>
<reference key="10">
    <citation type="journal article" date="2010" name="Mol. Cell">
        <title>MAGE-RING protein complexes comprise a family of E3 ubiquitin ligases.</title>
        <authorList>
            <person name="Doyle J.M."/>
            <person name="Gao J."/>
            <person name="Wang J."/>
            <person name="Yang M."/>
            <person name="Potts P.R."/>
        </authorList>
    </citation>
    <scope>FUNCTION</scope>
    <scope>INTERACTION WITH TRIM28 AND UBE2H</scope>
</reference>
<reference key="11">
    <citation type="journal article" date="2012" name="Cell Death Differ.">
        <title>MageA2 restrains cellular senescence by targeting the function of PMLIV/p53 axis at the PML-NBs.</title>
        <authorList>
            <person name="Peche L.Y."/>
            <person name="Scolz M."/>
            <person name="Ladelfa M.F."/>
            <person name="Monte M."/>
            <person name="Schneider C."/>
        </authorList>
    </citation>
    <scope>FUNCTION</scope>
    <scope>SUBCELLULAR LOCATION</scope>
    <scope>INTERACTION WITH PML</scope>
</reference>
<proteinExistence type="evidence at protein level"/>
<gene>
    <name type="primary">MAGEA2</name>
    <name type="synonym">MAGE2</name>
    <name type="synonym">MAGEA2A</name>
</gene>
<gene>
    <name type="primary">MAGEA2B</name>
    <name type="synonym">MAGE2</name>
    <name type="synonym">MAGEA2</name>
</gene>
<protein>
    <recommendedName>
        <fullName>Melanoma-associated antigen 2</fullName>
    </recommendedName>
    <alternativeName>
        <fullName>Cancer/testis antigen 1.2</fullName>
        <shortName>CT1.2</shortName>
    </alternativeName>
    <alternativeName>
        <fullName>MAGE-2 antigen</fullName>
    </alternativeName>
</protein>
<name>MAGA2_HUMAN</name>
<feature type="chain" id="PRO_0000156702" description="Melanoma-associated antigen 2">
    <location>
        <begin position="1"/>
        <end position="314"/>
    </location>
</feature>
<feature type="domain" description="MAGE" evidence="2">
    <location>
        <begin position="109"/>
        <end position="308"/>
    </location>
</feature>
<feature type="region of interest" description="Disordered" evidence="3">
    <location>
        <begin position="1"/>
        <end position="69"/>
    </location>
</feature>
<feature type="compositionally biased region" description="Basic and acidic residues" evidence="3">
    <location>
        <begin position="1"/>
        <end position="20"/>
    </location>
</feature>
<feature type="compositionally biased region" description="Low complexity" evidence="3">
    <location>
        <begin position="21"/>
        <end position="44"/>
    </location>
</feature>
<feature type="modified residue" description="Phosphoserine" evidence="1">
    <location>
        <position position="64"/>
    </location>
</feature>
<feature type="mutagenesis site" description="Improves ability to bind to HLA-A1." evidence="8">
    <original>V</original>
    <variation>D</variation>
    <location>
        <position position="170"/>
    </location>
</feature>
<evidence type="ECO:0000250" key="1">
    <source>
        <dbReference type="UniProtKB" id="P43355"/>
    </source>
</evidence>
<evidence type="ECO:0000255" key="2">
    <source>
        <dbReference type="PROSITE-ProRule" id="PRU00127"/>
    </source>
</evidence>
<evidence type="ECO:0000256" key="3">
    <source>
        <dbReference type="SAM" id="MobiDB-lite"/>
    </source>
</evidence>
<evidence type="ECO:0000269" key="4">
    <source>
    </source>
</evidence>
<evidence type="ECO:0000269" key="5">
    <source>
    </source>
</evidence>
<evidence type="ECO:0000269" key="6">
    <source>
    </source>
</evidence>
<evidence type="ECO:0000269" key="7">
    <source>
    </source>
</evidence>
<evidence type="ECO:0000269" key="8">
    <source>
    </source>
</evidence>
<dbReference type="EMBL" id="L18920">
    <property type="protein sequence ID" value="AAA17729.1"/>
    <property type="molecule type" value="Genomic_DNA"/>
</dbReference>
<dbReference type="EMBL" id="AK290443">
    <property type="protein sequence ID" value="BAF83132.1"/>
    <property type="molecule type" value="mRNA"/>
</dbReference>
<dbReference type="EMBL" id="U82671">
    <property type="status" value="NOT_ANNOTATED_CDS"/>
    <property type="molecule type" value="Genomic_DNA"/>
</dbReference>
<dbReference type="EMBL" id="CH471169">
    <property type="protein sequence ID" value="EAW99429.1"/>
    <property type="molecule type" value="Genomic_DNA"/>
</dbReference>
<dbReference type="EMBL" id="BC108720">
    <property type="protein sequence ID" value="AAI08721.1"/>
    <property type="molecule type" value="mRNA"/>
</dbReference>
<dbReference type="EMBL" id="BC112158">
    <property type="protein sequence ID" value="AAI12159.1"/>
    <property type="molecule type" value="mRNA"/>
</dbReference>
<dbReference type="EMBL" id="BC112160">
    <property type="protein sequence ID" value="AAI12161.1"/>
    <property type="molecule type" value="mRNA"/>
</dbReference>
<dbReference type="CCDS" id="CCDS76046.1"/>
<dbReference type="CCDS" id="CCDS76049.1"/>
<dbReference type="PIR" id="I68889">
    <property type="entry name" value="I68889"/>
</dbReference>
<dbReference type="RefSeq" id="NP_001269430.1">
    <property type="nucleotide sequence ID" value="NM_001282501.2"/>
</dbReference>
<dbReference type="RefSeq" id="NP_001269431.1">
    <property type="nucleotide sequence ID" value="NM_001282502.1"/>
</dbReference>
<dbReference type="RefSeq" id="NP_001269433.1">
    <property type="nucleotide sequence ID" value="NM_001282504.1"/>
</dbReference>
<dbReference type="RefSeq" id="NP_001269434.1">
    <property type="nucleotide sequence ID" value="NM_001282505.1"/>
</dbReference>
<dbReference type="RefSeq" id="NP_001308329.1">
    <property type="nucleotide sequence ID" value="NM_001321400.1"/>
</dbReference>
<dbReference type="RefSeq" id="NP_001308330.1">
    <property type="nucleotide sequence ID" value="NM_001321401.1"/>
</dbReference>
<dbReference type="RefSeq" id="NP_001308331.1">
    <property type="nucleotide sequence ID" value="NM_001321402.1"/>
</dbReference>
<dbReference type="RefSeq" id="NP_001308332.1">
    <property type="nucleotide sequence ID" value="NM_001321403.1"/>
</dbReference>
<dbReference type="RefSeq" id="NP_001308333.1">
    <property type="nucleotide sequence ID" value="NM_001321404.1"/>
</dbReference>
<dbReference type="RefSeq" id="NP_001373059.1">
    <property type="nucleotide sequence ID" value="NM_001386130.2"/>
</dbReference>
<dbReference type="RefSeq" id="NP_005352.1">
    <property type="nucleotide sequence ID" value="NM_005361.3"/>
</dbReference>
<dbReference type="RefSeq" id="NP_705692.1">
    <property type="nucleotide sequence ID" value="NM_153488.4"/>
</dbReference>
<dbReference type="RefSeq" id="NP_786884.1">
    <property type="nucleotide sequence ID" value="NM_175742.2"/>
</dbReference>
<dbReference type="RefSeq" id="NP_786885.1">
    <property type="nucleotide sequence ID" value="NM_175743.2"/>
</dbReference>
<dbReference type="RefSeq" id="XP_016884895.1">
    <property type="nucleotide sequence ID" value="XM_017029406.1"/>
</dbReference>
<dbReference type="RefSeq" id="XP_016885008.1">
    <property type="nucleotide sequence ID" value="XM_017029519.1"/>
</dbReference>
<dbReference type="SMR" id="P43356"/>
<dbReference type="BioGRID" id="110275">
    <property type="interactions" value="34"/>
</dbReference>
<dbReference type="BioGRID" id="129334">
    <property type="interactions" value="27"/>
</dbReference>
<dbReference type="CORUM" id="P43356"/>
<dbReference type="DIP" id="DIP-61231N"/>
<dbReference type="FunCoup" id="P43356">
    <property type="interactions" value="63"/>
</dbReference>
<dbReference type="IntAct" id="P43356">
    <property type="interactions" value="35"/>
</dbReference>
<dbReference type="STRING" id="9606.ENSP00000333487"/>
<dbReference type="GlyConnect" id="1497">
    <property type="glycosylation" value="7 N-Linked glycans (1 site)"/>
</dbReference>
<dbReference type="GlyCosmos" id="P43356">
    <property type="glycosylation" value="1 site, 6 glycans"/>
</dbReference>
<dbReference type="GlyGen" id="P43356">
    <property type="glycosylation" value="1 site, 6 N-linked glycans (1 site)"/>
</dbReference>
<dbReference type="iPTMnet" id="P43356"/>
<dbReference type="PhosphoSitePlus" id="P43356"/>
<dbReference type="BioMuta" id="MAGEA2B"/>
<dbReference type="DMDM" id="1170856"/>
<dbReference type="jPOST" id="P43356"/>
<dbReference type="MassIVE" id="P43356"/>
<dbReference type="PaxDb" id="9606-ENSP00000333487"/>
<dbReference type="PeptideAtlas" id="P43356"/>
<dbReference type="ProteomicsDB" id="55618"/>
<dbReference type="Antibodypedia" id="30741">
    <property type="antibodies" value="45 antibodies from 18 providers"/>
</dbReference>
<dbReference type="Antibodypedia" id="73570">
    <property type="antibodies" value="97 antibodies from 12 providers"/>
</dbReference>
<dbReference type="DNASU" id="4101"/>
<dbReference type="Ensembl" id="ENST00000331220.6">
    <property type="protein sequence ID" value="ENSP00000333487.2"/>
    <property type="gene ID" value="ENSG00000183305.14"/>
</dbReference>
<dbReference type="Ensembl" id="ENST00000370293.6">
    <property type="protein sequence ID" value="ENSP00000359316.2"/>
    <property type="gene ID" value="ENSG00000183305.14"/>
</dbReference>
<dbReference type="Ensembl" id="ENST00000595583.5">
    <property type="protein sequence ID" value="ENSP00000470872.1"/>
    <property type="gene ID" value="ENSG00000268606.6"/>
</dbReference>
<dbReference type="Ensembl" id="ENST00000598543.5">
    <property type="protein sequence ID" value="ENSP00000469919.1"/>
    <property type="gene ID" value="ENSG00000268606.6"/>
</dbReference>
<dbReference type="Ensembl" id="ENST00000611557.4">
    <property type="protein sequence ID" value="ENSP00000480738.1"/>
    <property type="gene ID" value="ENSG00000268606.6"/>
</dbReference>
<dbReference type="Ensembl" id="ENST00000611674.4">
    <property type="protein sequence ID" value="ENSP00000480491.1"/>
    <property type="gene ID" value="ENSG00000268606.6"/>
</dbReference>
<dbReference type="Ensembl" id="ENST00000620710.4">
    <property type="protein sequence ID" value="ENSP00000484290.1"/>
    <property type="gene ID" value="ENSG00000268606.6"/>
</dbReference>
<dbReference type="Ensembl" id="ENST00000623438.3">
    <property type="protein sequence ID" value="ENSP00000485391.1"/>
    <property type="gene ID" value="ENSG00000268606.6"/>
</dbReference>
<dbReference type="Ensembl" id="ENST00000623806.3">
    <property type="protein sequence ID" value="ENSP00000485541.1"/>
    <property type="gene ID" value="ENSG00000268606.6"/>
</dbReference>
<dbReference type="Ensembl" id="ENST00000682532.1">
    <property type="protein sequence ID" value="ENSP00000507594.1"/>
    <property type="gene ID" value="ENSG00000183305.14"/>
</dbReference>
<dbReference type="Ensembl" id="ENST00000684311.1">
    <property type="protein sequence ID" value="ENSP00000507899.1"/>
    <property type="gene ID" value="ENSG00000268606.6"/>
</dbReference>
<dbReference type="Ensembl" id="ENST00000709976.1">
    <property type="protein sequence ID" value="ENSP00000517963.1"/>
    <property type="gene ID" value="ENSG00000292187.1"/>
</dbReference>
<dbReference type="Ensembl" id="ENST00000709978.1">
    <property type="protein sequence ID" value="ENSP00000517964.1"/>
    <property type="gene ID" value="ENSG00000292187.1"/>
</dbReference>
<dbReference type="Ensembl" id="ENST00000709981.1">
    <property type="protein sequence ID" value="ENSP00000517967.1"/>
    <property type="gene ID" value="ENSG00000292187.1"/>
</dbReference>
<dbReference type="GeneID" id="266740"/>
<dbReference type="GeneID" id="4101"/>
<dbReference type="KEGG" id="hsa:266740"/>
<dbReference type="KEGG" id="hsa:4101"/>
<dbReference type="MANE-Select" id="ENST00000682532.1">
    <property type="protein sequence ID" value="ENSP00000507594.1"/>
    <property type="RefSeq nucleotide sequence ID" value="NM_001386132.1"/>
    <property type="RefSeq protein sequence ID" value="NP_001373061.1"/>
</dbReference>
<dbReference type="MANE-Select" id="ENST00000684311.1">
    <property type="protein sequence ID" value="ENSP00000507899.1"/>
    <property type="RefSeq nucleotide sequence ID" value="NM_001386130.2"/>
    <property type="RefSeq protein sequence ID" value="NP_001373059.1"/>
</dbReference>
<dbReference type="UCSC" id="uc004fgg.3">
    <property type="organism name" value="human"/>
</dbReference>
<dbReference type="AGR" id="HGNC:19340"/>
<dbReference type="AGR" id="HGNC:6800"/>
<dbReference type="CTD" id="266740"/>
<dbReference type="CTD" id="4101"/>
<dbReference type="DisGeNET" id="266740"/>
<dbReference type="DisGeNET" id="4101"/>
<dbReference type="GeneCards" id="MAGEA2"/>
<dbReference type="GeneCards" id="MAGEA2B"/>
<dbReference type="HGNC" id="HGNC:6800">
    <property type="gene designation" value="MAGEA2"/>
</dbReference>
<dbReference type="HGNC" id="HGNC:19340">
    <property type="gene designation" value="MAGEA2B"/>
</dbReference>
<dbReference type="HPA" id="ENSG00000183305">
    <property type="expression patterns" value="Tissue enriched (testis)"/>
</dbReference>
<dbReference type="HPA" id="ENSG00000268606">
    <property type="expression patterns" value="Tissue enriched (testis)"/>
</dbReference>
<dbReference type="MIM" id="300173">
    <property type="type" value="gene"/>
</dbReference>
<dbReference type="MIM" id="300549">
    <property type="type" value="gene"/>
</dbReference>
<dbReference type="neXtProt" id="NX_P43356"/>
<dbReference type="OpenTargets" id="ENSG00000183305"/>
<dbReference type="PharmGKB" id="PA30546"/>
<dbReference type="VEuPathDB" id="HostDB:ENSG00000183305"/>
<dbReference type="VEuPathDB" id="HostDB:ENSG00000268606"/>
<dbReference type="eggNOG" id="KOG4562">
    <property type="taxonomic scope" value="Eukaryota"/>
</dbReference>
<dbReference type="GeneTree" id="ENSGT00940000164673"/>
<dbReference type="HOGENOM" id="CLU_039582_1_1_1"/>
<dbReference type="InParanoid" id="P43356"/>
<dbReference type="OMA" id="SIGREYD"/>
<dbReference type="OrthoDB" id="9536323at2759"/>
<dbReference type="PAN-GO" id="P43356">
    <property type="GO annotations" value="3 GO annotations based on evolutionary models"/>
</dbReference>
<dbReference type="PhylomeDB" id="P43356"/>
<dbReference type="TreeFam" id="TF328505"/>
<dbReference type="PathwayCommons" id="P43356"/>
<dbReference type="SignaLink" id="P43356"/>
<dbReference type="BioGRID-ORCS" id="266740">
    <property type="hits" value="14 hits in 644 CRISPR screens"/>
</dbReference>
<dbReference type="BioGRID-ORCS" id="4101">
    <property type="hits" value="63 hits in 633 CRISPR screens"/>
</dbReference>
<dbReference type="ChiTaRS" id="MAGEA2B">
    <property type="organism name" value="human"/>
</dbReference>
<dbReference type="GeneWiki" id="MAGEA2"/>
<dbReference type="Pharos" id="P43356">
    <property type="development level" value="Tbio"/>
</dbReference>
<dbReference type="PRO" id="PR:P43356"/>
<dbReference type="Proteomes" id="UP000005640">
    <property type="component" value="Chromosome X"/>
</dbReference>
<dbReference type="RNAct" id="P43356">
    <property type="molecule type" value="protein"/>
</dbReference>
<dbReference type="Bgee" id="ENSG00000183305">
    <property type="expression patterns" value="Expressed in male germ line stem cell (sensu Vertebrata) in testis and 51 other cell types or tissues"/>
</dbReference>
<dbReference type="ExpressionAtlas" id="P43356">
    <property type="expression patterns" value="baseline and differential"/>
</dbReference>
<dbReference type="GO" id="GO:0005634">
    <property type="term" value="C:nucleus"/>
    <property type="evidence" value="ECO:0000314"/>
    <property type="project" value="UniProtKB"/>
</dbReference>
<dbReference type="GO" id="GO:0016605">
    <property type="term" value="C:PML body"/>
    <property type="evidence" value="ECO:0000314"/>
    <property type="project" value="UniProtKB"/>
</dbReference>
<dbReference type="GO" id="GO:0140297">
    <property type="term" value="F:DNA-binding transcription factor binding"/>
    <property type="evidence" value="ECO:0000314"/>
    <property type="project" value="UniProtKB"/>
</dbReference>
<dbReference type="GO" id="GO:0042826">
    <property type="term" value="F:histone deacetylase binding"/>
    <property type="evidence" value="ECO:0000314"/>
    <property type="project" value="UniProtKB"/>
</dbReference>
<dbReference type="GO" id="GO:0031625">
    <property type="term" value="F:ubiquitin protein ligase binding"/>
    <property type="evidence" value="ECO:0000314"/>
    <property type="project" value="UniProtKB"/>
</dbReference>
<dbReference type="GO" id="GO:0090398">
    <property type="term" value="P:cellular senescence"/>
    <property type="evidence" value="ECO:0000314"/>
    <property type="project" value="UniProtKB"/>
</dbReference>
<dbReference type="GO" id="GO:1901984">
    <property type="term" value="P:negative regulation of protein acetylation"/>
    <property type="evidence" value="ECO:0000314"/>
    <property type="project" value="UniProtKB"/>
</dbReference>
<dbReference type="GO" id="GO:0033234">
    <property type="term" value="P:negative regulation of protein sumoylation"/>
    <property type="evidence" value="ECO:0000314"/>
    <property type="project" value="UniProtKB"/>
</dbReference>
<dbReference type="GO" id="GO:0000122">
    <property type="term" value="P:negative regulation of transcription by RNA polymerase II"/>
    <property type="evidence" value="ECO:0000314"/>
    <property type="project" value="UniProtKB"/>
</dbReference>
<dbReference type="GO" id="GO:0051443">
    <property type="term" value="P:positive regulation of ubiquitin-protein transferase activity"/>
    <property type="evidence" value="ECO:0000315"/>
    <property type="project" value="UniProtKB"/>
</dbReference>
<dbReference type="GO" id="GO:0030163">
    <property type="term" value="P:protein catabolic process"/>
    <property type="evidence" value="ECO:0000315"/>
    <property type="project" value="UniProtKB"/>
</dbReference>
<dbReference type="GO" id="GO:0072331">
    <property type="term" value="P:signal transduction by p53 class mediator"/>
    <property type="evidence" value="ECO:0000314"/>
    <property type="project" value="UniProtKB"/>
</dbReference>
<dbReference type="FunFam" id="1.10.10.1200:FF:000002">
    <property type="entry name" value="MAGE family member A11"/>
    <property type="match status" value="1"/>
</dbReference>
<dbReference type="FunFam" id="1.10.10.1210:FF:000001">
    <property type="entry name" value="melanoma-associated antigen D1"/>
    <property type="match status" value="1"/>
</dbReference>
<dbReference type="Gene3D" id="1.10.10.1200">
    <property type="entry name" value="MAGE homology domain, winged helix WH1 motif"/>
    <property type="match status" value="1"/>
</dbReference>
<dbReference type="Gene3D" id="1.10.10.1210">
    <property type="entry name" value="MAGE homology domain, winged helix WH2 motif"/>
    <property type="match status" value="1"/>
</dbReference>
<dbReference type="InterPro" id="IPR037445">
    <property type="entry name" value="MAGE"/>
</dbReference>
<dbReference type="InterPro" id="IPR021072">
    <property type="entry name" value="MAGE_N"/>
</dbReference>
<dbReference type="InterPro" id="IPR041898">
    <property type="entry name" value="MAGE_WH1"/>
</dbReference>
<dbReference type="InterPro" id="IPR041899">
    <property type="entry name" value="MAGE_WH2"/>
</dbReference>
<dbReference type="InterPro" id="IPR002190">
    <property type="entry name" value="MHD_dom"/>
</dbReference>
<dbReference type="PANTHER" id="PTHR11736:SF74">
    <property type="entry name" value="MELANOMA-ASSOCIATED ANTIGEN 2"/>
    <property type="match status" value="1"/>
</dbReference>
<dbReference type="PANTHER" id="PTHR11736">
    <property type="entry name" value="MELANOMA-ASSOCIATED ANTIGEN MAGE ANTIGEN"/>
    <property type="match status" value="1"/>
</dbReference>
<dbReference type="Pfam" id="PF01454">
    <property type="entry name" value="MAGE"/>
    <property type="match status" value="1"/>
</dbReference>
<dbReference type="Pfam" id="PF12440">
    <property type="entry name" value="MAGE_N"/>
    <property type="match status" value="1"/>
</dbReference>
<dbReference type="SMART" id="SM01373">
    <property type="entry name" value="MAGE"/>
    <property type="match status" value="1"/>
</dbReference>
<dbReference type="SMART" id="SM01392">
    <property type="entry name" value="MAGE_N"/>
    <property type="match status" value="1"/>
</dbReference>
<dbReference type="PROSITE" id="PS50838">
    <property type="entry name" value="MAGE"/>
    <property type="match status" value="1"/>
</dbReference>
<organism>
    <name type="scientific">Homo sapiens</name>
    <name type="common">Human</name>
    <dbReference type="NCBI Taxonomy" id="9606"/>
    <lineage>
        <taxon>Eukaryota</taxon>
        <taxon>Metazoa</taxon>
        <taxon>Chordata</taxon>
        <taxon>Craniata</taxon>
        <taxon>Vertebrata</taxon>
        <taxon>Euteleostomi</taxon>
        <taxon>Mammalia</taxon>
        <taxon>Eutheria</taxon>
        <taxon>Euarchontoglires</taxon>
        <taxon>Primates</taxon>
        <taxon>Haplorrhini</taxon>
        <taxon>Catarrhini</taxon>
        <taxon>Hominidae</taxon>
        <taxon>Homo</taxon>
    </lineage>
</organism>
<keyword id="KW-0539">Nucleus</keyword>
<keyword id="KW-0597">Phosphoprotein</keyword>
<keyword id="KW-1267">Proteomics identification</keyword>
<keyword id="KW-1185">Reference proteome</keyword>
<keyword id="KW-0804">Transcription</keyword>
<keyword id="KW-0805">Transcription regulation</keyword>
<keyword id="KW-0825">Tumor antigen</keyword>
<keyword id="KW-0833">Ubl conjugation pathway</keyword>
<sequence>MPLEQRSQHCKPEEGLEARGEALGLVGAQAPATEEQQTASSSSTLVEVTLGEVPAADSPSPPHSPQGASSFSTTINYTLWRQSDEGSSNQEEEGPRMFPDLESEFQAAISRKMVELVHFLLLKYRAREPVTKAEMLESVLRNCQDFFPVIFSKASEYLQLVFGIEVVEVVPISHLYILVTCLGLSYDGLLGDNQVMPKTGLLIIVLAIIAIEGDCAPEEKIWEELSMLEVFEGREDSVFAHPRKLLMQDLVQENYLEYRQVPGSDPACYEFLWGPRALIETSYVKVLHHTLKIGGEPHISYPPLHERALREGEE</sequence>
<comment type="function">
    <text evidence="4 5 6 7">Reduces p53/TP53 transactivation function through recruitment of HDAC3 to p53/TP53 transcription sites. Also represses p73/TP73 activity. Proposed to enhance ubiquitin ligase activity of RING-type zinc finger-containing E3 ubiquitin-protein ligases. In vitro enhances ubiquitin ligase activity of TRIM28 and stimulates p53/TP53 ubiquitination by TRIM28 potentially in presence of Ubl-conjugating enzyme UBE2H. Proposed to act through recruitment and/or stabilization of the Ubl-conjugating enzyme (E2) at the E3:substrate complex. May play a role in embryonal development and tumor transformation or aspects of tumor progression. In vitro promotes cell viability in melanoma cell lines. Antigen recognized on a melanoma by autologous cytolytic T-lymphocytes. Negatively regulates acetylation and sumoylation of PML and represses PML-induced p53/TP53 acetylation and activation.</text>
</comment>
<comment type="subunit">
    <text evidence="4 6 7">Interacts with TRIM28 and UBE2H. Interacts with HDAC3. Interacts with PML (isoform PML-1, isoform PML-2, isoform PML-3, isoform PML-4 and isoform PML-5).</text>
</comment>
<comment type="interaction">
    <interactant intactId="EBI-5650739">
        <id>P43356</id>
    </interactant>
    <interactant intactId="EBI-2818055">
        <id>Q08AH1</id>
        <label>ACSM1</label>
    </interactant>
    <organismsDiffer>false</organismsDiffer>
    <experiments>3</experiments>
</comment>
<comment type="interaction">
    <interactant intactId="EBI-5650739">
        <id>P43356</id>
    </interactant>
    <interactant intactId="EBI-2371423">
        <id>O43865</id>
        <label>AHCYL1</label>
    </interactant>
    <organismsDiffer>false</organismsDiffer>
    <experiments>3</experiments>
</comment>
<comment type="interaction">
    <interactant intactId="EBI-5650739">
        <id>P43356</id>
    </interactant>
    <interactant intactId="EBI-22011535">
        <id>Q5TZF3-1</id>
        <label>ANKRD45</label>
    </interactant>
    <organismsDiffer>false</organismsDiffer>
    <experiments>3</experiments>
</comment>
<comment type="interaction">
    <interactant intactId="EBI-5650739">
        <id>P43356</id>
    </interactant>
    <interactant intactId="EBI-7162175">
        <id>Q9HBH7</id>
        <label>BEX1</label>
    </interactant>
    <organismsDiffer>false</organismsDiffer>
    <experiments>3</experiments>
</comment>
<comment type="interaction">
    <interactant intactId="EBI-5650739">
        <id>P43356</id>
    </interactant>
    <interactant intactId="EBI-745073">
        <id>Q9BXY8</id>
        <label>BEX2</label>
    </interactant>
    <organismsDiffer>false</organismsDiffer>
    <experiments>3</experiments>
</comment>
<comment type="interaction">
    <interactant intactId="EBI-5650739">
        <id>P43356</id>
    </interactant>
    <interactant intactId="EBI-1049597">
        <id>P27797</id>
        <label>CALR</label>
    </interactant>
    <organismsDiffer>false</organismsDiffer>
    <experiments>3</experiments>
</comment>
<comment type="interaction">
    <interactant intactId="EBI-5650739">
        <id>P43356</id>
    </interactant>
    <interactant intactId="EBI-740814">
        <id>Q8N715</id>
        <label>CCDC185</label>
    </interactant>
    <organismsDiffer>false</organismsDiffer>
    <experiments>3</experiments>
</comment>
<comment type="interaction">
    <interactant intactId="EBI-5650739">
        <id>P43356</id>
    </interactant>
    <interactant intactId="EBI-727477">
        <id>P12830</id>
        <label>CDH1</label>
    </interactant>
    <organismsDiffer>false</organismsDiffer>
    <experiments>3</experiments>
</comment>
<comment type="interaction">
    <interactant intactId="EBI-5650739">
        <id>P43356</id>
    </interactant>
    <interactant intactId="EBI-746189">
        <id>Q15078</id>
        <label>CDK5R1</label>
    </interactant>
    <organismsDiffer>false</organismsDiffer>
    <experiments>3</experiments>
</comment>
<comment type="interaction">
    <interactant intactId="EBI-5650739">
        <id>P43356</id>
    </interactant>
    <interactant intactId="EBI-11752486">
        <id>Q86XR8-3</id>
        <label>CEP57</label>
    </interactant>
    <organismsDiffer>false</organismsDiffer>
    <experiments>3</experiments>
</comment>
<comment type="interaction">
    <interactant intactId="EBI-5650739">
        <id>P43356</id>
    </interactant>
    <interactant intactId="EBI-12284865">
        <id>Q9Y3A0</id>
        <label>COQ4</label>
    </interactant>
    <organismsDiffer>false</organismsDiffer>
    <experiments>3</experiments>
</comment>
<comment type="interaction">
    <interactant intactId="EBI-5650739">
        <id>P43356</id>
    </interactant>
    <interactant intactId="EBI-2606678">
        <id>P15954</id>
        <label>COX7C</label>
    </interactant>
    <organismsDiffer>false</organismsDiffer>
    <experiments>3</experiments>
</comment>
<comment type="interaction">
    <interactant intactId="EBI-5650739">
        <id>P43356</id>
    </interactant>
    <interactant intactId="EBI-351007">
        <id>P36957</id>
        <label>DLST</label>
    </interactant>
    <organismsDiffer>false</organismsDiffer>
    <experiments>3</experiments>
</comment>
<comment type="interaction">
    <interactant intactId="EBI-5650739">
        <id>P43356</id>
    </interactant>
    <interactant intactId="EBI-372128">
        <id>Q9NP97</id>
        <label>DYNLRB1</label>
    </interactant>
    <organismsDiffer>false</organismsDiffer>
    <experiments>3</experiments>
</comment>
<comment type="interaction">
    <interactant intactId="EBI-5650739">
        <id>P43356</id>
    </interactant>
    <interactant intactId="EBI-607682">
        <id>O15379</id>
        <label>HDAC3</label>
    </interactant>
    <organismsDiffer>false</organismsDiffer>
    <experiments>4</experiments>
</comment>
<comment type="interaction">
    <interactant intactId="EBI-5650739">
        <id>P43356</id>
    </interactant>
    <interactant intactId="EBI-11978579">
        <id>O95983-2</id>
        <label>MBD3</label>
    </interactant>
    <organismsDiffer>false</organismsDiffer>
    <experiments>3</experiments>
</comment>
<comment type="interaction">
    <interactant intactId="EBI-5650739">
        <id>P43356</id>
    </interactant>
    <interactant intactId="EBI-713665">
        <id>P19404</id>
        <label>NDUFV2</label>
    </interactant>
    <organismsDiffer>false</organismsDiffer>
    <experiments>3</experiments>
</comment>
<comment type="interaction">
    <interactant intactId="EBI-5650739">
        <id>P43356</id>
    </interactant>
    <interactant intactId="EBI-1055945">
        <id>Q8TDX7</id>
        <label>NEK7</label>
    </interactant>
    <organismsDiffer>false</organismsDiffer>
    <experiments>3</experiments>
</comment>
<comment type="interaction">
    <interactant intactId="EBI-5650739">
        <id>P43356</id>
    </interactant>
    <interactant intactId="EBI-741158">
        <id>Q96HA8</id>
        <label>NTAQ1</label>
    </interactant>
    <organismsDiffer>false</organismsDiffer>
    <experiments>5</experiments>
</comment>
<comment type="interaction">
    <interactant intactId="EBI-5650739">
        <id>P43356</id>
    </interactant>
    <interactant intactId="EBI-10181968">
        <id>Q7Z4N8</id>
        <label>P4HA3</label>
    </interactant>
    <organismsDiffer>false</organismsDiffer>
    <experiments>4</experiments>
</comment>
<comment type="interaction">
    <interactant intactId="EBI-5650739">
        <id>P43356</id>
    </interactant>
    <interactant intactId="EBI-1383819">
        <id>P15735</id>
        <label>PHKG2</label>
    </interactant>
    <organismsDiffer>false</organismsDiffer>
    <experiments>3</experiments>
</comment>
<comment type="interaction">
    <interactant intactId="EBI-5650739">
        <id>P43356</id>
    </interactant>
    <interactant intactId="EBI-10320765">
        <id>Q9UGP5-2</id>
        <label>POLL</label>
    </interactant>
    <organismsDiffer>false</organismsDiffer>
    <experiments>3</experiments>
</comment>
<comment type="interaction">
    <interactant intactId="EBI-5650739">
        <id>P43356</id>
    </interactant>
    <interactant intactId="EBI-357598">
        <id>P62191</id>
        <label>PSMC1</label>
    </interactant>
    <organismsDiffer>false</organismsDiffer>
    <experiments>3</experiments>
</comment>
<comment type="interaction">
    <interactant intactId="EBI-5650739">
        <id>P43356</id>
    </interactant>
    <interactant intactId="EBI-373345">
        <id>Q99719</id>
        <label>SEPTIN5</label>
    </interactant>
    <organismsDiffer>false</organismsDiffer>
    <experiments>4</experiments>
</comment>
<comment type="interaction">
    <interactant intactId="EBI-5650739">
        <id>P43356</id>
    </interactant>
    <interactant intactId="EBI-358489">
        <id>Q96GM5</id>
        <label>SMARCD1</label>
    </interactant>
    <organismsDiffer>false</organismsDiffer>
    <experiments>3</experiments>
</comment>
<comment type="interaction">
    <interactant intactId="EBI-5650739">
        <id>P43356</id>
    </interactant>
    <interactant intactId="EBI-2509913">
        <id>Q96KP6</id>
        <label>TNIP3</label>
    </interactant>
    <organismsDiffer>false</organismsDiffer>
    <experiments>3</experiments>
</comment>
<comment type="interaction">
    <interactant intactId="EBI-5650739">
        <id>P43356</id>
    </interactant>
    <interactant intactId="EBI-366083">
        <id>P04637</id>
        <label>TP53</label>
    </interactant>
    <organismsDiffer>false</organismsDiffer>
    <experiments>7</experiments>
</comment>
<comment type="interaction">
    <interactant intactId="EBI-5650739">
        <id>P43356</id>
    </interactant>
    <interactant intactId="EBI-78139">
        <id>Q13263</id>
        <label>TRIM28</label>
    </interactant>
    <organismsDiffer>false</organismsDiffer>
    <experiments>6</experiments>
</comment>
<comment type="interaction">
    <interactant intactId="EBI-5650739">
        <id>P43356</id>
    </interactant>
    <interactant intactId="EBI-2129909">
        <id>P62256</id>
        <label>UBE2H</label>
    </interactant>
    <organismsDiffer>false</organismsDiffer>
    <experiments>2</experiments>
</comment>
<comment type="subcellular location">
    <subcellularLocation>
        <location>Nucleus</location>
    </subcellularLocation>
    <subcellularLocation>
        <location>Nucleus</location>
        <location>PML body</location>
    </subcellularLocation>
</comment>
<comment type="tissue specificity">
    <text>Expressed in many tumors of several types, such as melanoma, head and neck squamous cell carcinoma, lung carcinoma and breast carcinoma, but not in normal tissues except for testes.</text>
</comment>